<accession>Q62100</accession>
<accession>A3KMD8</accession>
<accession>Q5BKQ3</accession>
<dbReference type="EMBL" id="Z47352">
    <property type="protein sequence ID" value="CAA87412.1"/>
    <property type="molecule type" value="Genomic_DNA"/>
</dbReference>
<dbReference type="EMBL" id="AK132894">
    <property type="protein sequence ID" value="BAE21408.1"/>
    <property type="molecule type" value="mRNA"/>
</dbReference>
<dbReference type="EMBL" id="BC061127">
    <property type="protein sequence ID" value="AAH61127.1"/>
    <property type="molecule type" value="mRNA"/>
</dbReference>
<dbReference type="EMBL" id="BC090986">
    <property type="protein sequence ID" value="AAH90986.1"/>
    <property type="molecule type" value="mRNA"/>
</dbReference>
<dbReference type="CCDS" id="CCDS27954.1"/>
<dbReference type="RefSeq" id="NP_038666.2">
    <property type="nucleotide sequence ID" value="NM_013638.2"/>
</dbReference>
<dbReference type="FunCoup" id="Q62100">
    <property type="interactions" value="6"/>
</dbReference>
<dbReference type="STRING" id="10090.ENSMUSP00000059630"/>
<dbReference type="PhosphoSitePlus" id="Q62100"/>
<dbReference type="SwissPalm" id="Q62100"/>
<dbReference type="PaxDb" id="10090-ENSMUSP00000059630"/>
<dbReference type="ProteomicsDB" id="291742"/>
<dbReference type="DNASU" id="19120"/>
<dbReference type="Ensembl" id="ENSMUST00000050864.7">
    <property type="protein sequence ID" value="ENSMUSP00000059630.6"/>
    <property type="gene ID" value="ENSMUSG00000050058.7"/>
</dbReference>
<dbReference type="GeneID" id="19120"/>
<dbReference type="KEGG" id="mmu:19120"/>
<dbReference type="UCSC" id="uc007yef.1">
    <property type="organism name" value="mouse"/>
</dbReference>
<dbReference type="AGR" id="MGI:106601"/>
<dbReference type="CTD" id="58531"/>
<dbReference type="MGI" id="MGI:106601">
    <property type="gene designation" value="Prm3"/>
</dbReference>
<dbReference type="VEuPathDB" id="HostDB:ENSMUSG00000050058"/>
<dbReference type="eggNOG" id="ENOG502T3TU">
    <property type="taxonomic scope" value="Eukaryota"/>
</dbReference>
<dbReference type="GeneTree" id="ENSGT00390000001558"/>
<dbReference type="HOGENOM" id="CLU_2398985_0_0_1"/>
<dbReference type="InParanoid" id="Q62100"/>
<dbReference type="OMA" id="RCAKLNT"/>
<dbReference type="OrthoDB" id="9837884at2759"/>
<dbReference type="PhylomeDB" id="Q62100"/>
<dbReference type="BioGRID-ORCS" id="19120">
    <property type="hits" value="1 hit in 77 CRISPR screens"/>
</dbReference>
<dbReference type="ChiTaRS" id="Prm3">
    <property type="organism name" value="mouse"/>
</dbReference>
<dbReference type="PRO" id="PR:Q62100"/>
<dbReference type="Proteomes" id="UP000000589">
    <property type="component" value="Chromosome 16"/>
</dbReference>
<dbReference type="RNAct" id="Q62100">
    <property type="molecule type" value="protein"/>
</dbReference>
<dbReference type="Bgee" id="ENSMUSG00000050058">
    <property type="expression patterns" value="Expressed in seminiferous tubule of testis and 23 other cell types or tissues"/>
</dbReference>
<dbReference type="GO" id="GO:0005737">
    <property type="term" value="C:cytoplasm"/>
    <property type="evidence" value="ECO:0000314"/>
    <property type="project" value="MGI"/>
</dbReference>
<dbReference type="GO" id="GO:0000786">
    <property type="term" value="C:nucleosome"/>
    <property type="evidence" value="ECO:0007669"/>
    <property type="project" value="UniProtKB-KW"/>
</dbReference>
<dbReference type="GO" id="GO:0005634">
    <property type="term" value="C:nucleus"/>
    <property type="evidence" value="ECO:0007669"/>
    <property type="project" value="UniProtKB-SubCell"/>
</dbReference>
<dbReference type="GO" id="GO:0003677">
    <property type="term" value="F:DNA binding"/>
    <property type="evidence" value="ECO:0007669"/>
    <property type="project" value="UniProtKB-KW"/>
</dbReference>
<dbReference type="GO" id="GO:0030154">
    <property type="term" value="P:cell differentiation"/>
    <property type="evidence" value="ECO:0007669"/>
    <property type="project" value="UniProtKB-KW"/>
</dbReference>
<dbReference type="GO" id="GO:0030261">
    <property type="term" value="P:chromosome condensation"/>
    <property type="evidence" value="ECO:0007669"/>
    <property type="project" value="UniProtKB-KW"/>
</dbReference>
<dbReference type="GO" id="GO:0030317">
    <property type="term" value="P:flagellated sperm motility"/>
    <property type="evidence" value="ECO:0000315"/>
    <property type="project" value="MGI"/>
</dbReference>
<dbReference type="GO" id="GO:0007283">
    <property type="term" value="P:spermatogenesis"/>
    <property type="evidence" value="ECO:0007669"/>
    <property type="project" value="UniProtKB-KW"/>
</dbReference>
<dbReference type="InterPro" id="IPR026077">
    <property type="entry name" value="PRMP3"/>
</dbReference>
<dbReference type="PANTHER" id="PTHR14317:SF0">
    <property type="entry name" value="PROTAMINE-3"/>
    <property type="match status" value="1"/>
</dbReference>
<dbReference type="PANTHER" id="PTHR14317">
    <property type="entry name" value="SPERM PROTAMINE P3"/>
    <property type="match status" value="1"/>
</dbReference>
<evidence type="ECO:0000250" key="1">
    <source>
        <dbReference type="UniProtKB" id="Q64256"/>
    </source>
</evidence>
<evidence type="ECO:0000256" key="2">
    <source>
        <dbReference type="SAM" id="MobiDB-lite"/>
    </source>
</evidence>
<evidence type="ECO:0000305" key="3"/>
<gene>
    <name type="primary">Prm3</name>
</gene>
<organism>
    <name type="scientific">Mus musculus</name>
    <name type="common">Mouse</name>
    <dbReference type="NCBI Taxonomy" id="10090"/>
    <lineage>
        <taxon>Eukaryota</taxon>
        <taxon>Metazoa</taxon>
        <taxon>Chordata</taxon>
        <taxon>Craniata</taxon>
        <taxon>Vertebrata</taxon>
        <taxon>Euteleostomi</taxon>
        <taxon>Mammalia</taxon>
        <taxon>Eutheria</taxon>
        <taxon>Euarchontoglires</taxon>
        <taxon>Glires</taxon>
        <taxon>Rodentia</taxon>
        <taxon>Myomorpha</taxon>
        <taxon>Muroidea</taxon>
        <taxon>Muridae</taxon>
        <taxon>Murinae</taxon>
        <taxon>Mus</taxon>
        <taxon>Mus</taxon>
    </lineage>
</organism>
<name>PRM3_MOUSE</name>
<reference key="1">
    <citation type="journal article" date="1996" name="Mol. Reprod. Dev.">
        <title>Sequence analysis of the conserved protamine gene cluster shows that it contains a fourth expressed gene.</title>
        <authorList>
            <person name="Schlueter G."/>
            <person name="Celik A.B."/>
            <person name="Obata R."/>
            <person name="Schlicker M."/>
            <person name="Hofferbert S."/>
            <person name="Schlung A."/>
            <person name="Adham I.M."/>
            <person name="Engel W."/>
        </authorList>
    </citation>
    <scope>NUCLEOTIDE SEQUENCE [GENOMIC DNA]</scope>
    <source>
        <strain>129</strain>
    </source>
</reference>
<reference key="2">
    <citation type="journal article" date="2005" name="Science">
        <title>The transcriptional landscape of the mammalian genome.</title>
        <authorList>
            <person name="Carninci P."/>
            <person name="Kasukawa T."/>
            <person name="Katayama S."/>
            <person name="Gough J."/>
            <person name="Frith M.C."/>
            <person name="Maeda N."/>
            <person name="Oyama R."/>
            <person name="Ravasi T."/>
            <person name="Lenhard B."/>
            <person name="Wells C."/>
            <person name="Kodzius R."/>
            <person name="Shimokawa K."/>
            <person name="Bajic V.B."/>
            <person name="Brenner S.E."/>
            <person name="Batalov S."/>
            <person name="Forrest A.R."/>
            <person name="Zavolan M."/>
            <person name="Davis M.J."/>
            <person name="Wilming L.G."/>
            <person name="Aidinis V."/>
            <person name="Allen J.E."/>
            <person name="Ambesi-Impiombato A."/>
            <person name="Apweiler R."/>
            <person name="Aturaliya R.N."/>
            <person name="Bailey T.L."/>
            <person name="Bansal M."/>
            <person name="Baxter L."/>
            <person name="Beisel K.W."/>
            <person name="Bersano T."/>
            <person name="Bono H."/>
            <person name="Chalk A.M."/>
            <person name="Chiu K.P."/>
            <person name="Choudhary V."/>
            <person name="Christoffels A."/>
            <person name="Clutterbuck D.R."/>
            <person name="Crowe M.L."/>
            <person name="Dalla E."/>
            <person name="Dalrymple B.P."/>
            <person name="de Bono B."/>
            <person name="Della Gatta G."/>
            <person name="di Bernardo D."/>
            <person name="Down T."/>
            <person name="Engstrom P."/>
            <person name="Fagiolini M."/>
            <person name="Faulkner G."/>
            <person name="Fletcher C.F."/>
            <person name="Fukushima T."/>
            <person name="Furuno M."/>
            <person name="Futaki S."/>
            <person name="Gariboldi M."/>
            <person name="Georgii-Hemming P."/>
            <person name="Gingeras T.R."/>
            <person name="Gojobori T."/>
            <person name="Green R.E."/>
            <person name="Gustincich S."/>
            <person name="Harbers M."/>
            <person name="Hayashi Y."/>
            <person name="Hensch T.K."/>
            <person name="Hirokawa N."/>
            <person name="Hill D."/>
            <person name="Huminiecki L."/>
            <person name="Iacono M."/>
            <person name="Ikeo K."/>
            <person name="Iwama A."/>
            <person name="Ishikawa T."/>
            <person name="Jakt M."/>
            <person name="Kanapin A."/>
            <person name="Katoh M."/>
            <person name="Kawasawa Y."/>
            <person name="Kelso J."/>
            <person name="Kitamura H."/>
            <person name="Kitano H."/>
            <person name="Kollias G."/>
            <person name="Krishnan S.P."/>
            <person name="Kruger A."/>
            <person name="Kummerfeld S.K."/>
            <person name="Kurochkin I.V."/>
            <person name="Lareau L.F."/>
            <person name="Lazarevic D."/>
            <person name="Lipovich L."/>
            <person name="Liu J."/>
            <person name="Liuni S."/>
            <person name="McWilliam S."/>
            <person name="Madan Babu M."/>
            <person name="Madera M."/>
            <person name="Marchionni L."/>
            <person name="Matsuda H."/>
            <person name="Matsuzawa S."/>
            <person name="Miki H."/>
            <person name="Mignone F."/>
            <person name="Miyake S."/>
            <person name="Morris K."/>
            <person name="Mottagui-Tabar S."/>
            <person name="Mulder N."/>
            <person name="Nakano N."/>
            <person name="Nakauchi H."/>
            <person name="Ng P."/>
            <person name="Nilsson R."/>
            <person name="Nishiguchi S."/>
            <person name="Nishikawa S."/>
            <person name="Nori F."/>
            <person name="Ohara O."/>
            <person name="Okazaki Y."/>
            <person name="Orlando V."/>
            <person name="Pang K.C."/>
            <person name="Pavan W.J."/>
            <person name="Pavesi G."/>
            <person name="Pesole G."/>
            <person name="Petrovsky N."/>
            <person name="Piazza S."/>
            <person name="Reed J."/>
            <person name="Reid J.F."/>
            <person name="Ring B.Z."/>
            <person name="Ringwald M."/>
            <person name="Rost B."/>
            <person name="Ruan Y."/>
            <person name="Salzberg S.L."/>
            <person name="Sandelin A."/>
            <person name="Schneider C."/>
            <person name="Schoenbach C."/>
            <person name="Sekiguchi K."/>
            <person name="Semple C.A."/>
            <person name="Seno S."/>
            <person name="Sessa L."/>
            <person name="Sheng Y."/>
            <person name="Shibata Y."/>
            <person name="Shimada H."/>
            <person name="Shimada K."/>
            <person name="Silva D."/>
            <person name="Sinclair B."/>
            <person name="Sperling S."/>
            <person name="Stupka E."/>
            <person name="Sugiura K."/>
            <person name="Sultana R."/>
            <person name="Takenaka Y."/>
            <person name="Taki K."/>
            <person name="Tammoja K."/>
            <person name="Tan S.L."/>
            <person name="Tang S."/>
            <person name="Taylor M.S."/>
            <person name="Tegner J."/>
            <person name="Teichmann S.A."/>
            <person name="Ueda H.R."/>
            <person name="van Nimwegen E."/>
            <person name="Verardo R."/>
            <person name="Wei C.L."/>
            <person name="Yagi K."/>
            <person name="Yamanishi H."/>
            <person name="Zabarovsky E."/>
            <person name="Zhu S."/>
            <person name="Zimmer A."/>
            <person name="Hide W."/>
            <person name="Bult C."/>
            <person name="Grimmond S.M."/>
            <person name="Teasdale R.D."/>
            <person name="Liu E.T."/>
            <person name="Brusic V."/>
            <person name="Quackenbush J."/>
            <person name="Wahlestedt C."/>
            <person name="Mattick J.S."/>
            <person name="Hume D.A."/>
            <person name="Kai C."/>
            <person name="Sasaki D."/>
            <person name="Tomaru Y."/>
            <person name="Fukuda S."/>
            <person name="Kanamori-Katayama M."/>
            <person name="Suzuki M."/>
            <person name="Aoki J."/>
            <person name="Arakawa T."/>
            <person name="Iida J."/>
            <person name="Imamura K."/>
            <person name="Itoh M."/>
            <person name="Kato T."/>
            <person name="Kawaji H."/>
            <person name="Kawagashira N."/>
            <person name="Kawashima T."/>
            <person name="Kojima M."/>
            <person name="Kondo S."/>
            <person name="Konno H."/>
            <person name="Nakano K."/>
            <person name="Ninomiya N."/>
            <person name="Nishio T."/>
            <person name="Okada M."/>
            <person name="Plessy C."/>
            <person name="Shibata K."/>
            <person name="Shiraki T."/>
            <person name="Suzuki S."/>
            <person name="Tagami M."/>
            <person name="Waki K."/>
            <person name="Watahiki A."/>
            <person name="Okamura-Oho Y."/>
            <person name="Suzuki H."/>
            <person name="Kawai J."/>
            <person name="Hayashizaki Y."/>
        </authorList>
    </citation>
    <scope>NUCLEOTIDE SEQUENCE [LARGE SCALE MRNA]</scope>
    <source>
        <strain>C57BL/6J</strain>
        <tissue>Testis</tissue>
    </source>
</reference>
<reference key="3">
    <citation type="journal article" date="2004" name="Genome Res.">
        <title>The status, quality, and expansion of the NIH full-length cDNA project: the Mammalian Gene Collection (MGC).</title>
        <authorList>
            <consortium name="The MGC Project Team"/>
        </authorList>
    </citation>
    <scope>NUCLEOTIDE SEQUENCE [LARGE SCALE MRNA]</scope>
    <source>
        <tissue>Testis</tissue>
    </source>
</reference>
<reference key="4">
    <citation type="journal article" date="2010" name="Cell">
        <title>A tissue-specific atlas of mouse protein phosphorylation and expression.</title>
        <authorList>
            <person name="Huttlin E.L."/>
            <person name="Jedrychowski M.P."/>
            <person name="Elias J.E."/>
            <person name="Goswami T."/>
            <person name="Rad R."/>
            <person name="Beausoleil S.A."/>
            <person name="Villen J."/>
            <person name="Haas W."/>
            <person name="Sowa M.E."/>
            <person name="Gygi S.P."/>
        </authorList>
    </citation>
    <scope>IDENTIFICATION BY MASS SPECTROMETRY [LARGE SCALE ANALYSIS]</scope>
    <source>
        <tissue>Testis</tissue>
    </source>
</reference>
<keyword id="KW-0158">Chromosome</keyword>
<keyword id="KW-0217">Developmental protein</keyword>
<keyword id="KW-0221">Differentiation</keyword>
<keyword id="KW-0226">DNA condensation</keyword>
<keyword id="KW-0238">DNA-binding</keyword>
<keyword id="KW-0544">Nucleosome core</keyword>
<keyword id="KW-0539">Nucleus</keyword>
<keyword id="KW-0597">Phosphoprotein</keyword>
<keyword id="KW-1185">Reference proteome</keyword>
<keyword id="KW-0744">Spermatogenesis</keyword>
<sequence length="101" mass="11166">MGSRCAKLSTGHGPAQNTGHSRGHESSMKKLVACVSQDNFSLSSEGEEEEEDEEEEEEEEEEEEEEQIPVKGKLLLLEPEKQESAEDGEAQPSPEPKQTHS</sequence>
<feature type="chain" id="PRO_0000106638" description="Protamine-3">
    <location>
        <begin position="1"/>
        <end position="101"/>
    </location>
</feature>
<feature type="region of interest" description="Disordered" evidence="2">
    <location>
        <begin position="1"/>
        <end position="101"/>
    </location>
</feature>
<feature type="compositionally biased region" description="Acidic residues" evidence="2">
    <location>
        <begin position="45"/>
        <end position="67"/>
    </location>
</feature>
<feature type="modified residue" description="Phosphoserine" evidence="1">
    <location>
        <position position="93"/>
    </location>
</feature>
<feature type="sequence conflict" description="In Ref. 1; CAA87412." evidence="3" ref="1">
    <original>A</original>
    <variation>S</variation>
    <location>
        <position position="6"/>
    </location>
</feature>
<feature type="sequence conflict" description="In Ref. 1; CAA87412." evidence="3" ref="1">
    <original>G</original>
    <variation>EQ</variation>
    <location>
        <position position="13"/>
    </location>
</feature>
<feature type="sequence conflict" description="In Ref. 1; CAA87412." evidence="3" ref="1">
    <original>S</original>
    <variation>N</variation>
    <location>
        <position position="21"/>
    </location>
</feature>
<protein>
    <recommendedName>
        <fullName>Protamine-3</fullName>
    </recommendedName>
    <alternativeName>
        <fullName>Sperm protamine P3</fullName>
    </alternativeName>
</protein>
<comment type="function">
    <text>Protamines substitute for histones in the chromatin of sperm during the haploid phase of spermatogenesis. They compact sperm DNA into a highly condensed, stable and inactive complex.</text>
</comment>
<comment type="subcellular location">
    <subcellularLocation>
        <location>Nucleus</location>
    </subcellularLocation>
    <subcellularLocation>
        <location>Chromosome</location>
    </subcellularLocation>
</comment>
<comment type="tissue specificity">
    <text>Testis.</text>
</comment>
<comment type="similarity">
    <text evidence="3">Belongs to the protamine P3 family.</text>
</comment>
<proteinExistence type="evidence at protein level"/>